<keyword id="KW-0030">Aminoacyl-tRNA synthetase</keyword>
<keyword id="KW-0067">ATP-binding</keyword>
<keyword id="KW-0963">Cytoplasm</keyword>
<keyword id="KW-0436">Ligase</keyword>
<keyword id="KW-0479">Metal-binding</keyword>
<keyword id="KW-0547">Nucleotide-binding</keyword>
<keyword id="KW-0648">Protein biosynthesis</keyword>
<keyword id="KW-1185">Reference proteome</keyword>
<keyword id="KW-0694">RNA-binding</keyword>
<keyword id="KW-0820">tRNA-binding</keyword>
<keyword id="KW-0862">Zinc</keyword>
<evidence type="ECO:0000255" key="1">
    <source>
        <dbReference type="HAMAP-Rule" id="MF_00036"/>
    </source>
</evidence>
<sequence>MQTHEIRERFTNHFVKAGHEAVPSASLILDDPNLLFVNAGMVPFKPYFLGQQNPPFPNGTATSIQKCVRTLDIEEVGITTRHNTFFQMAGNFSFGQYFKEGAITHAWQLLTGTVAEGGLGLDPERLWVTVYLDDDEAAEIWNKKIGVPSERIQRLGMADNYWSMGIPGPCGPCSEIYYDRGPEYGAEGGPIADDNRYMEIWNLVFMENERGEGIGKDNFEIVGPLPKKNIDTGMGIERVACILQGVDNVYETDLLRPVINVAEELTGATYGTNDDDNIRFRVIADHSRTGMMLILDGVTPGNEGRGYILRRLLRRIIRSAHLLGAKGKTLEKFMNTIMDTMTPSYPEIADNRERILRVAITEEKAFLKTLASGTELFEDKADQVKNSGNKVLDGAAAFKLHDTYGFPIDLTLEMAAEAGLNVDIEGFNSLMAEQRARAKADNRAKKHGHADLSIYREWVDEHPTVFTGYDELTTDSKVLGLLSAGNKVNEIKAGEEVEVILEASPLYAEAGGQLGDRGQILMGDTVLKVNDVQKIGKKLWVHKATVAQGGLSVGDVVTAQVDSDWRHAARQAHTGTHLIHAALRQVLGPTAVQAGSMNKPGYLRFDFNYTESLTPRQLEEIQNITNQAVDSDWDVNTIETSLEEAKAMGALALFGENYGSEVRVIEVGGPFSIELCGGTHVTHSSQIGPVAILGESSVGSGVRRIEAYTGLDSFKYLAKEQALVENIASSMKVKPEELPDRIAALTQKLKDAEKAIADMRSAQLMAQATGLVAGAIEVNGVKLVAQRVSDVENMGDLRSLAADIKQRLDDVPAVVALVGEDASGKAPFVVGATKAAVSAGYKANAYAKILGQYIEGNGGGKPDMAQGSARNSSGFDQGIAAVKAEMSA</sequence>
<gene>
    <name evidence="1" type="primary">alaS</name>
    <name type="ordered locus">DIP1350</name>
</gene>
<organism>
    <name type="scientific">Corynebacterium diphtheriae (strain ATCC 700971 / NCTC 13129 / Biotype gravis)</name>
    <dbReference type="NCBI Taxonomy" id="257309"/>
    <lineage>
        <taxon>Bacteria</taxon>
        <taxon>Bacillati</taxon>
        <taxon>Actinomycetota</taxon>
        <taxon>Actinomycetes</taxon>
        <taxon>Mycobacteriales</taxon>
        <taxon>Corynebacteriaceae</taxon>
        <taxon>Corynebacterium</taxon>
    </lineage>
</organism>
<protein>
    <recommendedName>
        <fullName evidence="1">Alanine--tRNA ligase</fullName>
        <ecNumber evidence="1">6.1.1.7</ecNumber>
    </recommendedName>
    <alternativeName>
        <fullName evidence="1">Alanyl-tRNA synthetase</fullName>
        <shortName evidence="1">AlaRS</shortName>
    </alternativeName>
</protein>
<proteinExistence type="inferred from homology"/>
<feature type="chain" id="PRO_0000075097" description="Alanine--tRNA ligase">
    <location>
        <begin position="1"/>
        <end position="888"/>
    </location>
</feature>
<feature type="binding site" evidence="1">
    <location>
        <position position="573"/>
    </location>
    <ligand>
        <name>Zn(2+)</name>
        <dbReference type="ChEBI" id="CHEBI:29105"/>
    </ligand>
</feature>
<feature type="binding site" evidence="1">
    <location>
        <position position="577"/>
    </location>
    <ligand>
        <name>Zn(2+)</name>
        <dbReference type="ChEBI" id="CHEBI:29105"/>
    </ligand>
</feature>
<feature type="binding site" evidence="1">
    <location>
        <position position="676"/>
    </location>
    <ligand>
        <name>Zn(2+)</name>
        <dbReference type="ChEBI" id="CHEBI:29105"/>
    </ligand>
</feature>
<feature type="binding site" evidence="1">
    <location>
        <position position="680"/>
    </location>
    <ligand>
        <name>Zn(2+)</name>
        <dbReference type="ChEBI" id="CHEBI:29105"/>
    </ligand>
</feature>
<comment type="function">
    <text evidence="1">Catalyzes the attachment of alanine to tRNA(Ala) in a two-step reaction: alanine is first activated by ATP to form Ala-AMP and then transferred to the acceptor end of tRNA(Ala). Also edits incorrectly charged Ser-tRNA(Ala) and Gly-tRNA(Ala) via its editing domain.</text>
</comment>
<comment type="catalytic activity">
    <reaction evidence="1">
        <text>tRNA(Ala) + L-alanine + ATP = L-alanyl-tRNA(Ala) + AMP + diphosphate</text>
        <dbReference type="Rhea" id="RHEA:12540"/>
        <dbReference type="Rhea" id="RHEA-COMP:9657"/>
        <dbReference type="Rhea" id="RHEA-COMP:9923"/>
        <dbReference type="ChEBI" id="CHEBI:30616"/>
        <dbReference type="ChEBI" id="CHEBI:33019"/>
        <dbReference type="ChEBI" id="CHEBI:57972"/>
        <dbReference type="ChEBI" id="CHEBI:78442"/>
        <dbReference type="ChEBI" id="CHEBI:78497"/>
        <dbReference type="ChEBI" id="CHEBI:456215"/>
        <dbReference type="EC" id="6.1.1.7"/>
    </reaction>
</comment>
<comment type="cofactor">
    <cofactor evidence="1">
        <name>Zn(2+)</name>
        <dbReference type="ChEBI" id="CHEBI:29105"/>
    </cofactor>
    <text evidence="1">Binds 1 zinc ion per subunit.</text>
</comment>
<comment type="subcellular location">
    <subcellularLocation>
        <location evidence="1">Cytoplasm</location>
    </subcellularLocation>
</comment>
<comment type="domain">
    <text evidence="1">Consists of three domains; the N-terminal catalytic domain, the editing domain and the C-terminal C-Ala domain. The editing domain removes incorrectly charged amino acids, while the C-Ala domain, along with tRNA(Ala), serves as a bridge to cooperatively bring together the editing and aminoacylation centers thus stimulating deacylation of misacylated tRNAs.</text>
</comment>
<comment type="similarity">
    <text evidence="1">Belongs to the class-II aminoacyl-tRNA synthetase family.</text>
</comment>
<accession>P61699</accession>
<name>SYA_CORDI</name>
<reference key="1">
    <citation type="journal article" date="2003" name="Nucleic Acids Res.">
        <title>The complete genome sequence and analysis of Corynebacterium diphtheriae NCTC13129.</title>
        <authorList>
            <person name="Cerdeno-Tarraga A.-M."/>
            <person name="Efstratiou A."/>
            <person name="Dover L.G."/>
            <person name="Holden M.T.G."/>
            <person name="Pallen M.J."/>
            <person name="Bentley S.D."/>
            <person name="Besra G.S."/>
            <person name="Churcher C.M."/>
            <person name="James K.D."/>
            <person name="De Zoysa A."/>
            <person name="Chillingworth T."/>
            <person name="Cronin A."/>
            <person name="Dowd L."/>
            <person name="Feltwell T."/>
            <person name="Hamlin N."/>
            <person name="Holroyd S."/>
            <person name="Jagels K."/>
            <person name="Moule S."/>
            <person name="Quail M.A."/>
            <person name="Rabbinowitsch E."/>
            <person name="Rutherford K.M."/>
            <person name="Thomson N.R."/>
            <person name="Unwin L."/>
            <person name="Whitehead S."/>
            <person name="Barrell B.G."/>
            <person name="Parkhill J."/>
        </authorList>
    </citation>
    <scope>NUCLEOTIDE SEQUENCE [LARGE SCALE GENOMIC DNA]</scope>
    <source>
        <strain>ATCC 700971 / NCTC 13129 / Biotype gravis</strain>
    </source>
</reference>
<dbReference type="EC" id="6.1.1.7" evidence="1"/>
<dbReference type="EMBL" id="BX248357">
    <property type="protein sequence ID" value="CAE49878.1"/>
    <property type="molecule type" value="Genomic_DNA"/>
</dbReference>
<dbReference type="RefSeq" id="WP_010934998.1">
    <property type="nucleotide sequence ID" value="NC_002935.2"/>
</dbReference>
<dbReference type="SMR" id="P61699"/>
<dbReference type="STRING" id="257309.DIP1350"/>
<dbReference type="KEGG" id="cdi:DIP1350"/>
<dbReference type="HOGENOM" id="CLU_004485_1_1_11"/>
<dbReference type="Proteomes" id="UP000002198">
    <property type="component" value="Chromosome"/>
</dbReference>
<dbReference type="GO" id="GO:0005829">
    <property type="term" value="C:cytosol"/>
    <property type="evidence" value="ECO:0007669"/>
    <property type="project" value="TreeGrafter"/>
</dbReference>
<dbReference type="GO" id="GO:0004813">
    <property type="term" value="F:alanine-tRNA ligase activity"/>
    <property type="evidence" value="ECO:0007669"/>
    <property type="project" value="UniProtKB-UniRule"/>
</dbReference>
<dbReference type="GO" id="GO:0002161">
    <property type="term" value="F:aminoacyl-tRNA deacylase activity"/>
    <property type="evidence" value="ECO:0007669"/>
    <property type="project" value="TreeGrafter"/>
</dbReference>
<dbReference type="GO" id="GO:0005524">
    <property type="term" value="F:ATP binding"/>
    <property type="evidence" value="ECO:0007669"/>
    <property type="project" value="UniProtKB-UniRule"/>
</dbReference>
<dbReference type="GO" id="GO:0000049">
    <property type="term" value="F:tRNA binding"/>
    <property type="evidence" value="ECO:0007669"/>
    <property type="project" value="UniProtKB-KW"/>
</dbReference>
<dbReference type="GO" id="GO:0008270">
    <property type="term" value="F:zinc ion binding"/>
    <property type="evidence" value="ECO:0007669"/>
    <property type="project" value="UniProtKB-UniRule"/>
</dbReference>
<dbReference type="GO" id="GO:0006419">
    <property type="term" value="P:alanyl-tRNA aminoacylation"/>
    <property type="evidence" value="ECO:0007669"/>
    <property type="project" value="UniProtKB-UniRule"/>
</dbReference>
<dbReference type="CDD" id="cd00673">
    <property type="entry name" value="AlaRS_core"/>
    <property type="match status" value="1"/>
</dbReference>
<dbReference type="FunFam" id="2.40.30.130:FF:000001">
    <property type="entry name" value="Alanine--tRNA ligase"/>
    <property type="match status" value="1"/>
</dbReference>
<dbReference type="FunFam" id="3.10.310.40:FF:000001">
    <property type="entry name" value="Alanine--tRNA ligase"/>
    <property type="match status" value="1"/>
</dbReference>
<dbReference type="FunFam" id="3.30.54.20:FF:000001">
    <property type="entry name" value="Alanine--tRNA ligase"/>
    <property type="match status" value="1"/>
</dbReference>
<dbReference type="FunFam" id="3.30.930.10:FF:000004">
    <property type="entry name" value="Alanine--tRNA ligase"/>
    <property type="match status" value="1"/>
</dbReference>
<dbReference type="FunFam" id="3.30.980.10:FF:000004">
    <property type="entry name" value="Alanine--tRNA ligase, cytoplasmic"/>
    <property type="match status" value="1"/>
</dbReference>
<dbReference type="Gene3D" id="2.40.30.130">
    <property type="match status" value="1"/>
</dbReference>
<dbReference type="Gene3D" id="3.10.310.40">
    <property type="match status" value="1"/>
</dbReference>
<dbReference type="Gene3D" id="3.30.54.20">
    <property type="match status" value="1"/>
</dbReference>
<dbReference type="Gene3D" id="6.10.250.550">
    <property type="match status" value="1"/>
</dbReference>
<dbReference type="Gene3D" id="3.30.930.10">
    <property type="entry name" value="Bira Bifunctional Protein, Domain 2"/>
    <property type="match status" value="1"/>
</dbReference>
<dbReference type="Gene3D" id="3.30.980.10">
    <property type="entry name" value="Threonyl-trna Synthetase, Chain A, domain 2"/>
    <property type="match status" value="1"/>
</dbReference>
<dbReference type="HAMAP" id="MF_00036_B">
    <property type="entry name" value="Ala_tRNA_synth_B"/>
    <property type="match status" value="1"/>
</dbReference>
<dbReference type="InterPro" id="IPR045864">
    <property type="entry name" value="aa-tRNA-synth_II/BPL/LPL"/>
</dbReference>
<dbReference type="InterPro" id="IPR002318">
    <property type="entry name" value="Ala-tRNA-lgiase_IIc"/>
</dbReference>
<dbReference type="InterPro" id="IPR018162">
    <property type="entry name" value="Ala-tRNA-ligase_IIc_anticod-bd"/>
</dbReference>
<dbReference type="InterPro" id="IPR018165">
    <property type="entry name" value="Ala-tRNA-synth_IIc_core"/>
</dbReference>
<dbReference type="InterPro" id="IPR018164">
    <property type="entry name" value="Ala-tRNA-synth_IIc_N"/>
</dbReference>
<dbReference type="InterPro" id="IPR050058">
    <property type="entry name" value="Ala-tRNA_ligase"/>
</dbReference>
<dbReference type="InterPro" id="IPR023033">
    <property type="entry name" value="Ala_tRNA_ligase_euk/bac"/>
</dbReference>
<dbReference type="InterPro" id="IPR003156">
    <property type="entry name" value="DHHA1_dom"/>
</dbReference>
<dbReference type="InterPro" id="IPR018163">
    <property type="entry name" value="Thr/Ala-tRNA-synth_IIc_edit"/>
</dbReference>
<dbReference type="InterPro" id="IPR009000">
    <property type="entry name" value="Transl_B-barrel_sf"/>
</dbReference>
<dbReference type="InterPro" id="IPR012947">
    <property type="entry name" value="tRNA_SAD"/>
</dbReference>
<dbReference type="NCBIfam" id="TIGR00344">
    <property type="entry name" value="alaS"/>
    <property type="match status" value="1"/>
</dbReference>
<dbReference type="PANTHER" id="PTHR11777:SF9">
    <property type="entry name" value="ALANINE--TRNA LIGASE, CYTOPLASMIC"/>
    <property type="match status" value="1"/>
</dbReference>
<dbReference type="PANTHER" id="PTHR11777">
    <property type="entry name" value="ALANYL-TRNA SYNTHETASE"/>
    <property type="match status" value="1"/>
</dbReference>
<dbReference type="Pfam" id="PF02272">
    <property type="entry name" value="DHHA1"/>
    <property type="match status" value="1"/>
</dbReference>
<dbReference type="Pfam" id="PF01411">
    <property type="entry name" value="tRNA-synt_2c"/>
    <property type="match status" value="1"/>
</dbReference>
<dbReference type="Pfam" id="PF07973">
    <property type="entry name" value="tRNA_SAD"/>
    <property type="match status" value="1"/>
</dbReference>
<dbReference type="PRINTS" id="PR00980">
    <property type="entry name" value="TRNASYNTHALA"/>
</dbReference>
<dbReference type="SMART" id="SM00863">
    <property type="entry name" value="tRNA_SAD"/>
    <property type="match status" value="1"/>
</dbReference>
<dbReference type="SUPFAM" id="SSF55681">
    <property type="entry name" value="Class II aaRS and biotin synthetases"/>
    <property type="match status" value="1"/>
</dbReference>
<dbReference type="SUPFAM" id="SSF101353">
    <property type="entry name" value="Putative anticodon-binding domain of alanyl-tRNA synthetase (AlaRS)"/>
    <property type="match status" value="1"/>
</dbReference>
<dbReference type="SUPFAM" id="SSF55186">
    <property type="entry name" value="ThrRS/AlaRS common domain"/>
    <property type="match status" value="1"/>
</dbReference>
<dbReference type="SUPFAM" id="SSF50447">
    <property type="entry name" value="Translation proteins"/>
    <property type="match status" value="1"/>
</dbReference>
<dbReference type="PROSITE" id="PS50860">
    <property type="entry name" value="AA_TRNA_LIGASE_II_ALA"/>
    <property type="match status" value="1"/>
</dbReference>